<accession>B2FMR5</accession>
<protein>
    <recommendedName>
        <fullName evidence="1">Proline--tRNA ligase</fullName>
        <ecNumber evidence="1">6.1.1.15</ecNumber>
    </recommendedName>
    <alternativeName>
        <fullName evidence="1">Prolyl-tRNA synthetase</fullName>
        <shortName evidence="1">ProRS</shortName>
    </alternativeName>
</protein>
<gene>
    <name evidence="1" type="primary">proS</name>
    <name type="ordered locus">Smlt0665</name>
</gene>
<sequence>MRLSQFHLHTTKETPSDAELTSHRLMLRAGMIRKLASGLYTWSPLGLRVLRKVERIVREEMDRAGAVEFQIPTIQPKELWEQTGRWQKFGPQLLKIKDRKDQVFCYSPTAEEAACDFARSELSSYKQLPVNFYQVQTKFRDEIRPRFGVMRSREFLMKDAYSFHLHDECLVREYENMKSAYSRIFTRLGLDFRMVQADSGAIGGDASQEFHVIADSGEDALVFSTGSDYAANMEAAIAADPAPRAAASEAMRKVDTPTQKTCEDVAALLGIELQRTVKSVALIAGEGEAQQFVLVLVRGDHEVNEIKLAKVAGLDEQRFASEAEIAEYLGSVPGFLGPVAPAKAIRVVADREVAAMSDFVVGANEVGFHLAGVNWGRDLPEPEVADIRNVRAGDRALDGGELKIARGIEVGHVFQLGRKYAEALDATVLDENGKAAVMAMGCYGIGISRVVAAAIEQNHDDAGIIWPDAMAPWQVVVCVINPKGDAAVADAAASLLQELRDAGLDAALDDRGLRPGAMFADMELIGIPHRVVVSERGLGAGTYEYRSRRASEAESLDKATLLQRLQG</sequence>
<dbReference type="EC" id="6.1.1.15" evidence="1"/>
<dbReference type="EMBL" id="AM743169">
    <property type="protein sequence ID" value="CAQ44248.1"/>
    <property type="molecule type" value="Genomic_DNA"/>
</dbReference>
<dbReference type="RefSeq" id="WP_012479095.1">
    <property type="nucleotide sequence ID" value="NC_010943.1"/>
</dbReference>
<dbReference type="SMR" id="B2FMR5"/>
<dbReference type="EnsemblBacteria" id="CAQ44248">
    <property type="protein sequence ID" value="CAQ44248"/>
    <property type="gene ID" value="Smlt0665"/>
</dbReference>
<dbReference type="KEGG" id="sml:Smlt0665"/>
<dbReference type="PATRIC" id="fig|522373.3.peg.635"/>
<dbReference type="eggNOG" id="COG0442">
    <property type="taxonomic scope" value="Bacteria"/>
</dbReference>
<dbReference type="HOGENOM" id="CLU_016739_0_0_6"/>
<dbReference type="Proteomes" id="UP000008840">
    <property type="component" value="Chromosome"/>
</dbReference>
<dbReference type="GO" id="GO:0005829">
    <property type="term" value="C:cytosol"/>
    <property type="evidence" value="ECO:0007669"/>
    <property type="project" value="TreeGrafter"/>
</dbReference>
<dbReference type="GO" id="GO:0002161">
    <property type="term" value="F:aminoacyl-tRNA deacylase activity"/>
    <property type="evidence" value="ECO:0007669"/>
    <property type="project" value="InterPro"/>
</dbReference>
<dbReference type="GO" id="GO:0005524">
    <property type="term" value="F:ATP binding"/>
    <property type="evidence" value="ECO:0007669"/>
    <property type="project" value="UniProtKB-UniRule"/>
</dbReference>
<dbReference type="GO" id="GO:0004827">
    <property type="term" value="F:proline-tRNA ligase activity"/>
    <property type="evidence" value="ECO:0007669"/>
    <property type="project" value="UniProtKB-UniRule"/>
</dbReference>
<dbReference type="GO" id="GO:0006433">
    <property type="term" value="P:prolyl-tRNA aminoacylation"/>
    <property type="evidence" value="ECO:0007669"/>
    <property type="project" value="UniProtKB-UniRule"/>
</dbReference>
<dbReference type="CDD" id="cd04334">
    <property type="entry name" value="ProRS-INS"/>
    <property type="match status" value="1"/>
</dbReference>
<dbReference type="CDD" id="cd00861">
    <property type="entry name" value="ProRS_anticodon_short"/>
    <property type="match status" value="1"/>
</dbReference>
<dbReference type="CDD" id="cd00779">
    <property type="entry name" value="ProRS_core_prok"/>
    <property type="match status" value="1"/>
</dbReference>
<dbReference type="FunFam" id="3.30.930.10:FF:000042">
    <property type="entry name" value="probable proline--tRNA ligase, mitochondrial"/>
    <property type="match status" value="1"/>
</dbReference>
<dbReference type="FunFam" id="3.30.930.10:FF:000097">
    <property type="entry name" value="Proline--tRNA ligase"/>
    <property type="match status" value="1"/>
</dbReference>
<dbReference type="Gene3D" id="3.40.50.800">
    <property type="entry name" value="Anticodon-binding domain"/>
    <property type="match status" value="1"/>
</dbReference>
<dbReference type="Gene3D" id="3.30.930.10">
    <property type="entry name" value="Bira Bifunctional Protein, Domain 2"/>
    <property type="match status" value="2"/>
</dbReference>
<dbReference type="Gene3D" id="3.90.960.10">
    <property type="entry name" value="YbaK/aminoacyl-tRNA synthetase-associated domain"/>
    <property type="match status" value="1"/>
</dbReference>
<dbReference type="HAMAP" id="MF_01569">
    <property type="entry name" value="Pro_tRNA_synth_type1"/>
    <property type="match status" value="1"/>
</dbReference>
<dbReference type="InterPro" id="IPR002314">
    <property type="entry name" value="aa-tRNA-synt_IIb"/>
</dbReference>
<dbReference type="InterPro" id="IPR006195">
    <property type="entry name" value="aa-tRNA-synth_II"/>
</dbReference>
<dbReference type="InterPro" id="IPR045864">
    <property type="entry name" value="aa-tRNA-synth_II/BPL/LPL"/>
</dbReference>
<dbReference type="InterPro" id="IPR004154">
    <property type="entry name" value="Anticodon-bd"/>
</dbReference>
<dbReference type="InterPro" id="IPR036621">
    <property type="entry name" value="Anticodon-bd_dom_sf"/>
</dbReference>
<dbReference type="InterPro" id="IPR002316">
    <property type="entry name" value="Pro-tRNA-ligase_IIa"/>
</dbReference>
<dbReference type="InterPro" id="IPR004500">
    <property type="entry name" value="Pro-tRNA-synth_IIa_bac-type"/>
</dbReference>
<dbReference type="InterPro" id="IPR023717">
    <property type="entry name" value="Pro-tRNA-Synthase_IIa_type1"/>
</dbReference>
<dbReference type="InterPro" id="IPR050062">
    <property type="entry name" value="Pro-tRNA_synthetase"/>
</dbReference>
<dbReference type="InterPro" id="IPR044140">
    <property type="entry name" value="ProRS_anticodon_short"/>
</dbReference>
<dbReference type="InterPro" id="IPR033730">
    <property type="entry name" value="ProRS_core_prok"/>
</dbReference>
<dbReference type="InterPro" id="IPR036754">
    <property type="entry name" value="YbaK/aa-tRNA-synt-asso_dom_sf"/>
</dbReference>
<dbReference type="InterPro" id="IPR007214">
    <property type="entry name" value="YbaK/aa-tRNA-synth-assoc-dom"/>
</dbReference>
<dbReference type="NCBIfam" id="NF006625">
    <property type="entry name" value="PRK09194.1"/>
    <property type="match status" value="1"/>
</dbReference>
<dbReference type="NCBIfam" id="TIGR00409">
    <property type="entry name" value="proS_fam_II"/>
    <property type="match status" value="1"/>
</dbReference>
<dbReference type="PANTHER" id="PTHR42753">
    <property type="entry name" value="MITOCHONDRIAL RIBOSOME PROTEIN L39/PROLYL-TRNA LIGASE FAMILY MEMBER"/>
    <property type="match status" value="1"/>
</dbReference>
<dbReference type="PANTHER" id="PTHR42753:SF2">
    <property type="entry name" value="PROLINE--TRNA LIGASE"/>
    <property type="match status" value="1"/>
</dbReference>
<dbReference type="Pfam" id="PF03129">
    <property type="entry name" value="HGTP_anticodon"/>
    <property type="match status" value="1"/>
</dbReference>
<dbReference type="Pfam" id="PF00587">
    <property type="entry name" value="tRNA-synt_2b"/>
    <property type="match status" value="1"/>
</dbReference>
<dbReference type="Pfam" id="PF04073">
    <property type="entry name" value="tRNA_edit"/>
    <property type="match status" value="1"/>
</dbReference>
<dbReference type="PRINTS" id="PR01046">
    <property type="entry name" value="TRNASYNTHPRO"/>
</dbReference>
<dbReference type="SUPFAM" id="SSF52954">
    <property type="entry name" value="Class II aaRS ABD-related"/>
    <property type="match status" value="1"/>
</dbReference>
<dbReference type="SUPFAM" id="SSF55681">
    <property type="entry name" value="Class II aaRS and biotin synthetases"/>
    <property type="match status" value="1"/>
</dbReference>
<dbReference type="SUPFAM" id="SSF55826">
    <property type="entry name" value="YbaK/ProRS associated domain"/>
    <property type="match status" value="1"/>
</dbReference>
<dbReference type="PROSITE" id="PS50862">
    <property type="entry name" value="AA_TRNA_LIGASE_II"/>
    <property type="match status" value="1"/>
</dbReference>
<proteinExistence type="inferred from homology"/>
<name>SYP_STRMK</name>
<evidence type="ECO:0000255" key="1">
    <source>
        <dbReference type="HAMAP-Rule" id="MF_01569"/>
    </source>
</evidence>
<reference key="1">
    <citation type="journal article" date="2008" name="Genome Biol.">
        <title>The complete genome, comparative and functional analysis of Stenotrophomonas maltophilia reveals an organism heavily shielded by drug resistance determinants.</title>
        <authorList>
            <person name="Crossman L.C."/>
            <person name="Gould V.C."/>
            <person name="Dow J.M."/>
            <person name="Vernikos G.S."/>
            <person name="Okazaki A."/>
            <person name="Sebaihia M."/>
            <person name="Saunders D."/>
            <person name="Arrowsmith C."/>
            <person name="Carver T."/>
            <person name="Peters N."/>
            <person name="Adlem E."/>
            <person name="Kerhornou A."/>
            <person name="Lord A."/>
            <person name="Murphy L."/>
            <person name="Seeger K."/>
            <person name="Squares R."/>
            <person name="Rutter S."/>
            <person name="Quail M.A."/>
            <person name="Rajandream M.A."/>
            <person name="Harris D."/>
            <person name="Churcher C."/>
            <person name="Bentley S.D."/>
            <person name="Parkhill J."/>
            <person name="Thomson N.R."/>
            <person name="Avison M.B."/>
        </authorList>
    </citation>
    <scope>NUCLEOTIDE SEQUENCE [LARGE SCALE GENOMIC DNA]</scope>
    <source>
        <strain>K279a</strain>
    </source>
</reference>
<keyword id="KW-0030">Aminoacyl-tRNA synthetase</keyword>
<keyword id="KW-0067">ATP-binding</keyword>
<keyword id="KW-0963">Cytoplasm</keyword>
<keyword id="KW-0436">Ligase</keyword>
<keyword id="KW-0547">Nucleotide-binding</keyword>
<keyword id="KW-0648">Protein biosynthesis</keyword>
<keyword id="KW-1185">Reference proteome</keyword>
<comment type="function">
    <text evidence="1">Catalyzes the attachment of proline to tRNA(Pro) in a two-step reaction: proline is first activated by ATP to form Pro-AMP and then transferred to the acceptor end of tRNA(Pro). As ProRS can inadvertently accommodate and process non-cognate amino acids such as alanine and cysteine, to avoid such errors it has two additional distinct editing activities against alanine. One activity is designated as 'pretransfer' editing and involves the tRNA(Pro)-independent hydrolysis of activated Ala-AMP. The other activity is designated 'posttransfer' editing and involves deacylation of mischarged Ala-tRNA(Pro). The misacylated Cys-tRNA(Pro) is not edited by ProRS.</text>
</comment>
<comment type="catalytic activity">
    <reaction evidence="1">
        <text>tRNA(Pro) + L-proline + ATP = L-prolyl-tRNA(Pro) + AMP + diphosphate</text>
        <dbReference type="Rhea" id="RHEA:14305"/>
        <dbReference type="Rhea" id="RHEA-COMP:9700"/>
        <dbReference type="Rhea" id="RHEA-COMP:9702"/>
        <dbReference type="ChEBI" id="CHEBI:30616"/>
        <dbReference type="ChEBI" id="CHEBI:33019"/>
        <dbReference type="ChEBI" id="CHEBI:60039"/>
        <dbReference type="ChEBI" id="CHEBI:78442"/>
        <dbReference type="ChEBI" id="CHEBI:78532"/>
        <dbReference type="ChEBI" id="CHEBI:456215"/>
        <dbReference type="EC" id="6.1.1.15"/>
    </reaction>
</comment>
<comment type="subunit">
    <text evidence="1">Homodimer.</text>
</comment>
<comment type="subcellular location">
    <subcellularLocation>
        <location evidence="1">Cytoplasm</location>
    </subcellularLocation>
</comment>
<comment type="domain">
    <text evidence="1">Consists of three domains: the N-terminal catalytic domain, the editing domain and the C-terminal anticodon-binding domain.</text>
</comment>
<comment type="similarity">
    <text evidence="1">Belongs to the class-II aminoacyl-tRNA synthetase family. ProS type 1 subfamily.</text>
</comment>
<organism>
    <name type="scientific">Stenotrophomonas maltophilia (strain K279a)</name>
    <dbReference type="NCBI Taxonomy" id="522373"/>
    <lineage>
        <taxon>Bacteria</taxon>
        <taxon>Pseudomonadati</taxon>
        <taxon>Pseudomonadota</taxon>
        <taxon>Gammaproteobacteria</taxon>
        <taxon>Lysobacterales</taxon>
        <taxon>Lysobacteraceae</taxon>
        <taxon>Stenotrophomonas</taxon>
        <taxon>Stenotrophomonas maltophilia group</taxon>
    </lineage>
</organism>
<feature type="chain" id="PRO_1000199424" description="Proline--tRNA ligase">
    <location>
        <begin position="1"/>
        <end position="567"/>
    </location>
</feature>